<evidence type="ECO:0000255" key="1">
    <source>
        <dbReference type="HAMAP-Rule" id="MF_00531"/>
    </source>
</evidence>
<evidence type="ECO:0000305" key="2"/>
<name>RS19_NEIMA</name>
<dbReference type="EMBL" id="AL157959">
    <property type="protein sequence ID" value="CAM07443.1"/>
    <property type="molecule type" value="Genomic_DNA"/>
</dbReference>
<dbReference type="RefSeq" id="WP_002215422.1">
    <property type="nucleotide sequence ID" value="NC_003116.1"/>
</dbReference>
<dbReference type="SMR" id="P66486"/>
<dbReference type="EnsemblBacteria" id="CAM07443">
    <property type="protein sequence ID" value="CAM07443"/>
    <property type="gene ID" value="NMA0125"/>
</dbReference>
<dbReference type="GeneID" id="93387221"/>
<dbReference type="KEGG" id="nma:NMA0125"/>
<dbReference type="HOGENOM" id="CLU_144911_0_1_4"/>
<dbReference type="Proteomes" id="UP000000626">
    <property type="component" value="Chromosome"/>
</dbReference>
<dbReference type="GO" id="GO:0005737">
    <property type="term" value="C:cytoplasm"/>
    <property type="evidence" value="ECO:0007669"/>
    <property type="project" value="UniProtKB-ARBA"/>
</dbReference>
<dbReference type="GO" id="GO:0015935">
    <property type="term" value="C:small ribosomal subunit"/>
    <property type="evidence" value="ECO:0007669"/>
    <property type="project" value="InterPro"/>
</dbReference>
<dbReference type="GO" id="GO:0019843">
    <property type="term" value="F:rRNA binding"/>
    <property type="evidence" value="ECO:0007669"/>
    <property type="project" value="UniProtKB-UniRule"/>
</dbReference>
<dbReference type="GO" id="GO:0003735">
    <property type="term" value="F:structural constituent of ribosome"/>
    <property type="evidence" value="ECO:0007669"/>
    <property type="project" value="InterPro"/>
</dbReference>
<dbReference type="GO" id="GO:0000028">
    <property type="term" value="P:ribosomal small subunit assembly"/>
    <property type="evidence" value="ECO:0007669"/>
    <property type="project" value="TreeGrafter"/>
</dbReference>
<dbReference type="GO" id="GO:0006412">
    <property type="term" value="P:translation"/>
    <property type="evidence" value="ECO:0007669"/>
    <property type="project" value="UniProtKB-UniRule"/>
</dbReference>
<dbReference type="FunFam" id="3.30.860.10:FF:000001">
    <property type="entry name" value="30S ribosomal protein S19"/>
    <property type="match status" value="1"/>
</dbReference>
<dbReference type="Gene3D" id="3.30.860.10">
    <property type="entry name" value="30s Ribosomal Protein S19, Chain A"/>
    <property type="match status" value="1"/>
</dbReference>
<dbReference type="HAMAP" id="MF_00531">
    <property type="entry name" value="Ribosomal_uS19"/>
    <property type="match status" value="1"/>
</dbReference>
<dbReference type="InterPro" id="IPR002222">
    <property type="entry name" value="Ribosomal_uS19"/>
</dbReference>
<dbReference type="InterPro" id="IPR005732">
    <property type="entry name" value="Ribosomal_uS19_bac-type"/>
</dbReference>
<dbReference type="InterPro" id="IPR020934">
    <property type="entry name" value="Ribosomal_uS19_CS"/>
</dbReference>
<dbReference type="InterPro" id="IPR023575">
    <property type="entry name" value="Ribosomal_uS19_SF"/>
</dbReference>
<dbReference type="NCBIfam" id="TIGR01050">
    <property type="entry name" value="rpsS_bact"/>
    <property type="match status" value="1"/>
</dbReference>
<dbReference type="PANTHER" id="PTHR11880">
    <property type="entry name" value="RIBOSOMAL PROTEIN S19P FAMILY MEMBER"/>
    <property type="match status" value="1"/>
</dbReference>
<dbReference type="PANTHER" id="PTHR11880:SF8">
    <property type="entry name" value="SMALL RIBOSOMAL SUBUNIT PROTEIN US19M"/>
    <property type="match status" value="1"/>
</dbReference>
<dbReference type="Pfam" id="PF00203">
    <property type="entry name" value="Ribosomal_S19"/>
    <property type="match status" value="1"/>
</dbReference>
<dbReference type="PIRSF" id="PIRSF002144">
    <property type="entry name" value="Ribosomal_S19"/>
    <property type="match status" value="1"/>
</dbReference>
<dbReference type="PRINTS" id="PR00975">
    <property type="entry name" value="RIBOSOMALS19"/>
</dbReference>
<dbReference type="SUPFAM" id="SSF54570">
    <property type="entry name" value="Ribosomal protein S19"/>
    <property type="match status" value="1"/>
</dbReference>
<dbReference type="PROSITE" id="PS00323">
    <property type="entry name" value="RIBOSOMAL_S19"/>
    <property type="match status" value="1"/>
</dbReference>
<proteinExistence type="inferred from homology"/>
<organism>
    <name type="scientific">Neisseria meningitidis serogroup A / serotype 4A (strain DSM 15465 / Z2491)</name>
    <dbReference type="NCBI Taxonomy" id="122587"/>
    <lineage>
        <taxon>Bacteria</taxon>
        <taxon>Pseudomonadati</taxon>
        <taxon>Pseudomonadota</taxon>
        <taxon>Betaproteobacteria</taxon>
        <taxon>Neisseriales</taxon>
        <taxon>Neisseriaceae</taxon>
        <taxon>Neisseria</taxon>
    </lineage>
</organism>
<comment type="function">
    <text evidence="1">Protein S19 forms a complex with S13 that binds strongly to the 16S ribosomal RNA.</text>
</comment>
<comment type="similarity">
    <text evidence="1">Belongs to the universal ribosomal protein uS19 family.</text>
</comment>
<accession>P66486</accession>
<accession>A1INY6</accession>
<accession>Q9JR96</accession>
<sequence length="92" mass="10362">MARSLKKGPYVDLHLLKKVDAARASNDKRPIKTWSRRSTILPDFIGLTIAVHNGRTHVPVFISDNMVGHKLGEFSLTRTFKGHLADKKAKKK</sequence>
<reference key="1">
    <citation type="journal article" date="2000" name="Nature">
        <title>Complete DNA sequence of a serogroup A strain of Neisseria meningitidis Z2491.</title>
        <authorList>
            <person name="Parkhill J."/>
            <person name="Achtman M."/>
            <person name="James K.D."/>
            <person name="Bentley S.D."/>
            <person name="Churcher C.M."/>
            <person name="Klee S.R."/>
            <person name="Morelli G."/>
            <person name="Basham D."/>
            <person name="Brown D."/>
            <person name="Chillingworth T."/>
            <person name="Davies R.M."/>
            <person name="Davis P."/>
            <person name="Devlin K."/>
            <person name="Feltwell T."/>
            <person name="Hamlin N."/>
            <person name="Holroyd S."/>
            <person name="Jagels K."/>
            <person name="Leather S."/>
            <person name="Moule S."/>
            <person name="Mungall K.L."/>
            <person name="Quail M.A."/>
            <person name="Rajandream M.A."/>
            <person name="Rutherford K.M."/>
            <person name="Simmonds M."/>
            <person name="Skelton J."/>
            <person name="Whitehead S."/>
            <person name="Spratt B.G."/>
            <person name="Barrell B.G."/>
        </authorList>
    </citation>
    <scope>NUCLEOTIDE SEQUENCE [LARGE SCALE GENOMIC DNA]</scope>
    <source>
        <strain>DSM 15465 / Z2491</strain>
    </source>
</reference>
<gene>
    <name evidence="1" type="primary">rpsS</name>
    <name type="ordered locus">NMA0125</name>
</gene>
<protein>
    <recommendedName>
        <fullName evidence="1">Small ribosomal subunit protein uS19</fullName>
    </recommendedName>
    <alternativeName>
        <fullName evidence="2">30S ribosomal protein S19</fullName>
    </alternativeName>
</protein>
<keyword id="KW-0687">Ribonucleoprotein</keyword>
<keyword id="KW-0689">Ribosomal protein</keyword>
<keyword id="KW-0694">RNA-binding</keyword>
<keyword id="KW-0699">rRNA-binding</keyword>
<feature type="chain" id="PRO_0000129864" description="Small ribosomal subunit protein uS19">
    <location>
        <begin position="1"/>
        <end position="92"/>
    </location>
</feature>